<gene>
    <name type="primary">AIM5</name>
    <name type="synonym">FMP51</name>
    <name type="ORF">C1Q_01598</name>
</gene>
<protein>
    <recommendedName>
        <fullName>MICOS complex subunit MIC12</fullName>
    </recommendedName>
    <alternativeName>
        <fullName>Altered inheritance of mitochondria protein 5, mitochondrial</fullName>
    </alternativeName>
    <alternativeName>
        <fullName>Found in mitochondrial proteome protein 51</fullName>
    </alternativeName>
</protein>
<comment type="function">
    <text evidence="1">Component of the MICOS complex, a large protein complex of the mitochondrial inner membrane that plays crucial roles in the maintenance of crista junctions, inner membrane architecture, and formation of contact sites to the outer membrane.</text>
</comment>
<comment type="subunit">
    <text evidence="1">Component of the mitochondrial contact site and cristae organizing system (MICOS) complex.</text>
</comment>
<comment type="subcellular location">
    <subcellularLocation>
        <location evidence="1">Mitochondrion inner membrane</location>
        <topology evidence="1">Single-pass membrane protein</topology>
    </subcellularLocation>
</comment>
<comment type="similarity">
    <text evidence="3">Belongs to the MICOS complex subunit Mic12 family.</text>
</comment>
<organism>
    <name type="scientific">Saccharomyces cerevisiae (strain JAY291)</name>
    <name type="common">Baker's yeast</name>
    <dbReference type="NCBI Taxonomy" id="574961"/>
    <lineage>
        <taxon>Eukaryota</taxon>
        <taxon>Fungi</taxon>
        <taxon>Dikarya</taxon>
        <taxon>Ascomycota</taxon>
        <taxon>Saccharomycotina</taxon>
        <taxon>Saccharomycetes</taxon>
        <taxon>Saccharomycetales</taxon>
        <taxon>Saccharomycetaceae</taxon>
        <taxon>Saccharomyces</taxon>
    </lineage>
</organism>
<feature type="chain" id="PRO_0000399894" description="MICOS complex subunit MIC12">
    <location>
        <begin position="1"/>
        <end position="106"/>
    </location>
</feature>
<feature type="transmembrane region" description="Helical" evidence="2">
    <location>
        <begin position="11"/>
        <end position="27"/>
    </location>
</feature>
<sequence>MSKLGPLARSVKWTLSVGVIGSVFYLYRYSNNGYFYDHDATWLKQDHQVQDLVDRKEVVPGETRNRKLVVTDDGTAWSRTMGESIKDIWNEQIRNSVDWIYSWGKN</sequence>
<proteinExistence type="inferred from homology"/>
<reference key="1">
    <citation type="journal article" date="2009" name="Genome Res.">
        <title>Genome structure of a Saccharomyces cerevisiae strain widely used in bioethanol production.</title>
        <authorList>
            <person name="Argueso J.L."/>
            <person name="Carazzolle M.F."/>
            <person name="Mieczkowski P.A."/>
            <person name="Duarte F.M."/>
            <person name="Netto O.V.C."/>
            <person name="Missawa S.K."/>
            <person name="Galzerani F."/>
            <person name="Costa G.G.L."/>
            <person name="Vidal R.O."/>
            <person name="Noronha M.F."/>
            <person name="Dominska M."/>
            <person name="Andrietta M.G.S."/>
            <person name="Andrietta S.R."/>
            <person name="Cunha A.F."/>
            <person name="Gomes L.H."/>
            <person name="Tavares F.C.A."/>
            <person name="Alcarde A.R."/>
            <person name="Dietrich F.S."/>
            <person name="McCusker J.H."/>
            <person name="Petes T.D."/>
            <person name="Pereira G.A.G."/>
        </authorList>
    </citation>
    <scope>NUCLEOTIDE SEQUENCE [LARGE SCALE GENOMIC DNA]</scope>
    <source>
        <strain>JAY291</strain>
    </source>
</reference>
<name>MIC12_YEAS2</name>
<evidence type="ECO:0000250" key="1"/>
<evidence type="ECO:0000255" key="2"/>
<evidence type="ECO:0000305" key="3"/>
<keyword id="KW-0472">Membrane</keyword>
<keyword id="KW-0496">Mitochondrion</keyword>
<keyword id="KW-0999">Mitochondrion inner membrane</keyword>
<keyword id="KW-0812">Transmembrane</keyword>
<keyword id="KW-1133">Transmembrane helix</keyword>
<accession>C7GMW8</accession>
<dbReference type="EMBL" id="ACFL01000067">
    <property type="protein sequence ID" value="EEU07876.1"/>
    <property type="molecule type" value="Genomic_DNA"/>
</dbReference>
<dbReference type="SMR" id="C7GMW8"/>
<dbReference type="Proteomes" id="UP000008073">
    <property type="component" value="Unassembled WGS sequence"/>
</dbReference>
<dbReference type="GO" id="GO:0061617">
    <property type="term" value="C:MICOS complex"/>
    <property type="evidence" value="ECO:0007669"/>
    <property type="project" value="InterPro"/>
</dbReference>
<dbReference type="GO" id="GO:0044284">
    <property type="term" value="C:mitochondrial crista junction"/>
    <property type="evidence" value="ECO:0007669"/>
    <property type="project" value="InterPro"/>
</dbReference>
<dbReference type="GO" id="GO:0042407">
    <property type="term" value="P:cristae formation"/>
    <property type="evidence" value="ECO:0007669"/>
    <property type="project" value="InterPro"/>
</dbReference>
<dbReference type="InterPro" id="IPR031463">
    <property type="entry name" value="Mic12"/>
</dbReference>
<dbReference type="Pfam" id="PF17050">
    <property type="entry name" value="AIM5"/>
    <property type="match status" value="1"/>
</dbReference>